<keyword id="KW-0067">ATP-binding</keyword>
<keyword id="KW-0119">Carbohydrate metabolism</keyword>
<keyword id="KW-0320">Glycogen biosynthesis</keyword>
<keyword id="KW-0321">Glycogen metabolism</keyword>
<keyword id="KW-0547">Nucleotide-binding</keyword>
<keyword id="KW-0548">Nucleotidyltransferase</keyword>
<keyword id="KW-0808">Transferase</keyword>
<gene>
    <name evidence="1" type="primary">glgC</name>
    <name type="ordered locus">YPK_0149</name>
</gene>
<dbReference type="EC" id="2.7.7.27" evidence="1"/>
<dbReference type="EMBL" id="CP000950">
    <property type="protein sequence ID" value="ACA66462.1"/>
    <property type="molecule type" value="Genomic_DNA"/>
</dbReference>
<dbReference type="RefSeq" id="WP_012105899.1">
    <property type="nucleotide sequence ID" value="NZ_CP009792.1"/>
</dbReference>
<dbReference type="SMR" id="B1JHX9"/>
<dbReference type="GeneID" id="49784218"/>
<dbReference type="KEGG" id="ypy:YPK_0149"/>
<dbReference type="PATRIC" id="fig|502800.11.peg.755"/>
<dbReference type="UniPathway" id="UPA00164"/>
<dbReference type="GO" id="GO:0005524">
    <property type="term" value="F:ATP binding"/>
    <property type="evidence" value="ECO:0007669"/>
    <property type="project" value="UniProtKB-KW"/>
</dbReference>
<dbReference type="GO" id="GO:0008878">
    <property type="term" value="F:glucose-1-phosphate adenylyltransferase activity"/>
    <property type="evidence" value="ECO:0007669"/>
    <property type="project" value="UniProtKB-UniRule"/>
</dbReference>
<dbReference type="GO" id="GO:0005978">
    <property type="term" value="P:glycogen biosynthetic process"/>
    <property type="evidence" value="ECO:0007669"/>
    <property type="project" value="UniProtKB-UniRule"/>
</dbReference>
<dbReference type="CDD" id="cd02508">
    <property type="entry name" value="ADP_Glucose_PP"/>
    <property type="match status" value="1"/>
</dbReference>
<dbReference type="CDD" id="cd04651">
    <property type="entry name" value="LbH_G1P_AT_C"/>
    <property type="match status" value="1"/>
</dbReference>
<dbReference type="FunFam" id="3.90.550.10:FF:000014">
    <property type="entry name" value="Glucose-1-phosphate adenylyltransferase"/>
    <property type="match status" value="1"/>
</dbReference>
<dbReference type="Gene3D" id="2.160.10.10">
    <property type="entry name" value="Hexapeptide repeat proteins"/>
    <property type="match status" value="1"/>
</dbReference>
<dbReference type="Gene3D" id="3.90.550.10">
    <property type="entry name" value="Spore Coat Polysaccharide Biosynthesis Protein SpsA, Chain A"/>
    <property type="match status" value="1"/>
</dbReference>
<dbReference type="HAMAP" id="MF_00624">
    <property type="entry name" value="GlgC"/>
    <property type="match status" value="1"/>
</dbReference>
<dbReference type="InterPro" id="IPR011831">
    <property type="entry name" value="ADP-Glc_PPase"/>
</dbReference>
<dbReference type="InterPro" id="IPR005836">
    <property type="entry name" value="ADP_Glu_pyroP_CS"/>
</dbReference>
<dbReference type="InterPro" id="IPR023049">
    <property type="entry name" value="GlgC_bac"/>
</dbReference>
<dbReference type="InterPro" id="IPR056818">
    <property type="entry name" value="GlmU/GlgC-like_hexapep"/>
</dbReference>
<dbReference type="InterPro" id="IPR005835">
    <property type="entry name" value="NTP_transferase_dom"/>
</dbReference>
<dbReference type="InterPro" id="IPR029044">
    <property type="entry name" value="Nucleotide-diphossugar_trans"/>
</dbReference>
<dbReference type="InterPro" id="IPR011004">
    <property type="entry name" value="Trimer_LpxA-like_sf"/>
</dbReference>
<dbReference type="NCBIfam" id="TIGR02091">
    <property type="entry name" value="glgC"/>
    <property type="match status" value="1"/>
</dbReference>
<dbReference type="NCBIfam" id="NF001947">
    <property type="entry name" value="PRK00725.1"/>
    <property type="match status" value="1"/>
</dbReference>
<dbReference type="NCBIfam" id="NF002023">
    <property type="entry name" value="PRK00844.1"/>
    <property type="match status" value="1"/>
</dbReference>
<dbReference type="PANTHER" id="PTHR43523:SF2">
    <property type="entry name" value="GLUCOSE-1-PHOSPHATE ADENYLYLTRANSFERASE"/>
    <property type="match status" value="1"/>
</dbReference>
<dbReference type="PANTHER" id="PTHR43523">
    <property type="entry name" value="GLUCOSE-1-PHOSPHATE ADENYLYLTRANSFERASE-RELATED"/>
    <property type="match status" value="1"/>
</dbReference>
<dbReference type="Pfam" id="PF24894">
    <property type="entry name" value="Hexapep_GlmU"/>
    <property type="match status" value="1"/>
</dbReference>
<dbReference type="Pfam" id="PF00483">
    <property type="entry name" value="NTP_transferase"/>
    <property type="match status" value="1"/>
</dbReference>
<dbReference type="SUPFAM" id="SSF53448">
    <property type="entry name" value="Nucleotide-diphospho-sugar transferases"/>
    <property type="match status" value="1"/>
</dbReference>
<dbReference type="SUPFAM" id="SSF51161">
    <property type="entry name" value="Trimeric LpxA-like enzymes"/>
    <property type="match status" value="1"/>
</dbReference>
<dbReference type="PROSITE" id="PS00808">
    <property type="entry name" value="ADP_GLC_PYROPHOSPH_1"/>
    <property type="match status" value="1"/>
</dbReference>
<dbReference type="PROSITE" id="PS00809">
    <property type="entry name" value="ADP_GLC_PYROPHOSPH_2"/>
    <property type="match status" value="1"/>
</dbReference>
<dbReference type="PROSITE" id="PS00810">
    <property type="entry name" value="ADP_GLC_PYROPHOSPH_3"/>
    <property type="match status" value="1"/>
</dbReference>
<name>GLGC_YERPY</name>
<evidence type="ECO:0000255" key="1">
    <source>
        <dbReference type="HAMAP-Rule" id="MF_00624"/>
    </source>
</evidence>
<accession>B1JHX9</accession>
<protein>
    <recommendedName>
        <fullName evidence="1">Glucose-1-phosphate adenylyltransferase</fullName>
        <ecNumber evidence="1">2.7.7.27</ecNumber>
    </recommendedName>
    <alternativeName>
        <fullName evidence="1">ADP-glucose pyrophosphorylase</fullName>
        <shortName evidence="1">ADPGlc PPase</shortName>
    </alternativeName>
    <alternativeName>
        <fullName evidence="1">ADP-glucose synthase</fullName>
    </alternativeName>
</protein>
<comment type="function">
    <text evidence="1">Involved in the biosynthesis of ADP-glucose, a building block required for the elongation reactions to produce glycogen. Catalyzes the reaction between ATP and alpha-D-glucose 1-phosphate (G1P) to produce pyrophosphate and ADP-Glc.</text>
</comment>
<comment type="catalytic activity">
    <reaction evidence="1">
        <text>alpha-D-glucose 1-phosphate + ATP + H(+) = ADP-alpha-D-glucose + diphosphate</text>
        <dbReference type="Rhea" id="RHEA:12120"/>
        <dbReference type="ChEBI" id="CHEBI:15378"/>
        <dbReference type="ChEBI" id="CHEBI:30616"/>
        <dbReference type="ChEBI" id="CHEBI:33019"/>
        <dbReference type="ChEBI" id="CHEBI:57498"/>
        <dbReference type="ChEBI" id="CHEBI:58601"/>
        <dbReference type="EC" id="2.7.7.27"/>
    </reaction>
</comment>
<comment type="pathway">
    <text evidence="1">Glycan biosynthesis; glycogen biosynthesis.</text>
</comment>
<comment type="subunit">
    <text evidence="1">Homotetramer.</text>
</comment>
<comment type="similarity">
    <text evidence="1">Belongs to the bacterial/plant glucose-1-phosphate adenylyltransferase family.</text>
</comment>
<organism>
    <name type="scientific">Yersinia pseudotuberculosis serotype O:3 (strain YPIII)</name>
    <dbReference type="NCBI Taxonomy" id="502800"/>
    <lineage>
        <taxon>Bacteria</taxon>
        <taxon>Pseudomonadati</taxon>
        <taxon>Pseudomonadota</taxon>
        <taxon>Gammaproteobacteria</taxon>
        <taxon>Enterobacterales</taxon>
        <taxon>Yersiniaceae</taxon>
        <taxon>Yersinia</taxon>
    </lineage>
</organism>
<reference key="1">
    <citation type="submission" date="2008-02" db="EMBL/GenBank/DDBJ databases">
        <title>Complete sequence of Yersinia pseudotuberculosis YPIII.</title>
        <authorList>
            <consortium name="US DOE Joint Genome Institute"/>
            <person name="Copeland A."/>
            <person name="Lucas S."/>
            <person name="Lapidus A."/>
            <person name="Glavina del Rio T."/>
            <person name="Dalin E."/>
            <person name="Tice H."/>
            <person name="Bruce D."/>
            <person name="Goodwin L."/>
            <person name="Pitluck S."/>
            <person name="Munk A.C."/>
            <person name="Brettin T."/>
            <person name="Detter J.C."/>
            <person name="Han C."/>
            <person name="Tapia R."/>
            <person name="Schmutz J."/>
            <person name="Larimer F."/>
            <person name="Land M."/>
            <person name="Hauser L."/>
            <person name="Challacombe J.F."/>
            <person name="Green L."/>
            <person name="Lindler L.E."/>
            <person name="Nikolich M.P."/>
            <person name="Richardson P."/>
        </authorList>
    </citation>
    <scope>NUCLEOTIDE SEQUENCE [LARGE SCALE GENOMIC DNA]</scope>
    <source>
        <strain>YPIII</strain>
    </source>
</reference>
<sequence>MVRFESTDSLMLARQLPNKTVALILAGGRGSRLKDLTATRAKPAVHFGGKFRIIDFALSNCLNSGVRRIGVITQYQSHTLVQHIQRGWSFLNEEMNEFVDLLPAQQRLSTEQWYKGTADAVCQNLDIIRRYDAEYIVILAGDHIYKMDYSRMLLDHVEKGAECTVACIPVPISEGSEFGIMEVTADYQITAFYEKPANPPPIPGDPSNALASMGIYIFNADYLFKLLEEDNNTPGSSHDFGKDIIPQLTARKVVWAHPFDLSCVTSNAELPPYWRDVGTLDAYWRANLDLASVTPELDMYDRAWPIRTHMEPLPPAKFVQDRSGSHGMTMNSLVSGGCIVSGSVVVHSVLFPRVRVNSFCTIDSSLLLPDVHVGRSCRLRRCIIDRACHIPEGMVIGENADEDSARFYRSEGGVVLVTRDMLAKLEAK</sequence>
<feature type="chain" id="PRO_1000130514" description="Glucose-1-phosphate adenylyltransferase">
    <location>
        <begin position="1"/>
        <end position="428"/>
    </location>
</feature>
<feature type="binding site" evidence="1">
    <location>
        <position position="114"/>
    </location>
    <ligand>
        <name>alpha-D-glucose 1-phosphate</name>
        <dbReference type="ChEBI" id="CHEBI:58601"/>
    </ligand>
</feature>
<feature type="binding site" evidence="1">
    <location>
        <position position="179"/>
    </location>
    <ligand>
        <name>alpha-D-glucose 1-phosphate</name>
        <dbReference type="ChEBI" id="CHEBI:58601"/>
    </ligand>
</feature>
<feature type="binding site" evidence="1">
    <location>
        <begin position="194"/>
        <end position="195"/>
    </location>
    <ligand>
        <name>alpha-D-glucose 1-phosphate</name>
        <dbReference type="ChEBI" id="CHEBI:58601"/>
    </ligand>
</feature>
<feature type="binding site" evidence="1">
    <location>
        <position position="212"/>
    </location>
    <ligand>
        <name>alpha-D-glucose 1-phosphate</name>
        <dbReference type="ChEBI" id="CHEBI:58601"/>
    </ligand>
</feature>
<proteinExistence type="inferred from homology"/>